<feature type="transit peptide" description="Mitochondrion" evidence="2">
    <location>
        <begin position="1"/>
        <end status="unknown"/>
    </location>
</feature>
<feature type="chain" id="PRO_0000405499" description="Mitochondrial zinc maintenance protein 1, mitochondrial">
    <location>
        <begin status="unknown"/>
        <end position="116"/>
    </location>
</feature>
<feature type="region of interest" description="Disordered" evidence="3">
    <location>
        <begin position="89"/>
        <end position="116"/>
    </location>
</feature>
<feature type="compositionally biased region" description="Gly residues" evidence="3">
    <location>
        <begin position="104"/>
        <end position="116"/>
    </location>
</feature>
<dbReference type="EMBL" id="GG698942">
    <property type="protein sequence ID" value="EEU35318.1"/>
    <property type="molecule type" value="Genomic_DNA"/>
</dbReference>
<dbReference type="RefSeq" id="XP_003041031.1">
    <property type="nucleotide sequence ID" value="XM_003040985.1"/>
</dbReference>
<dbReference type="SMR" id="C7ZKY9"/>
<dbReference type="FunCoup" id="C7ZKY9">
    <property type="interactions" value="14"/>
</dbReference>
<dbReference type="STRING" id="660122.C7ZKY9"/>
<dbReference type="EnsemblFungi" id="NechaT92201">
    <property type="protein sequence ID" value="NechaP92201"/>
    <property type="gene ID" value="NechaG92201"/>
</dbReference>
<dbReference type="GeneID" id="9675425"/>
<dbReference type="KEGG" id="nhe:NECHADRAFT_92201"/>
<dbReference type="VEuPathDB" id="FungiDB:NECHADRAFT_92201"/>
<dbReference type="eggNOG" id="ENOG502S6EF">
    <property type="taxonomic scope" value="Eukaryota"/>
</dbReference>
<dbReference type="HOGENOM" id="CLU_147114_2_2_1"/>
<dbReference type="InParanoid" id="C7ZKY9"/>
<dbReference type="OMA" id="KYKLRIH"/>
<dbReference type="OrthoDB" id="529194at2759"/>
<dbReference type="Proteomes" id="UP000005206">
    <property type="component" value="Unassembled WGS sequence"/>
</dbReference>
<dbReference type="GO" id="GO:0005759">
    <property type="term" value="C:mitochondrial matrix"/>
    <property type="evidence" value="ECO:0007669"/>
    <property type="project" value="UniProtKB-SubCell"/>
</dbReference>
<dbReference type="GO" id="GO:0044183">
    <property type="term" value="F:protein folding chaperone"/>
    <property type="evidence" value="ECO:0007669"/>
    <property type="project" value="TreeGrafter"/>
</dbReference>
<dbReference type="GO" id="GO:0034551">
    <property type="term" value="P:mitochondrial respiratory chain complex III assembly"/>
    <property type="evidence" value="ECO:0007669"/>
    <property type="project" value="InterPro"/>
</dbReference>
<dbReference type="CDD" id="cd20267">
    <property type="entry name" value="Complex1_LYR_LYRM7"/>
    <property type="match status" value="1"/>
</dbReference>
<dbReference type="InterPro" id="IPR045298">
    <property type="entry name" value="Complex1_LYR_LYRM7"/>
</dbReference>
<dbReference type="InterPro" id="IPR050435">
    <property type="entry name" value="MZM1/LYRM7"/>
</dbReference>
<dbReference type="PANTHER" id="PTHR46749">
    <property type="entry name" value="COMPLEX III ASSEMBLY FACTOR LYRM7"/>
    <property type="match status" value="1"/>
</dbReference>
<dbReference type="PANTHER" id="PTHR46749:SF1">
    <property type="entry name" value="COMPLEX III ASSEMBLY FACTOR LYRM7"/>
    <property type="match status" value="1"/>
</dbReference>
<name>MZM1_FUSV7</name>
<comment type="function">
    <text evidence="1">Assembly factor required for Rieske Fe-S protein RIP1 incorporation into the cytochrome b-c1 (CIII) complex. Functions as a chaperone, binding to this subunit within the mitochondrial matrix and stabilizing it prior to its translocation and insertion into the late CIII dimeric intermediate within the mitochondrial inner membrane. Modulates the mitochondrial matrix zinc pool (By similarity).</text>
</comment>
<comment type="subunit">
    <text evidence="1">Interacts with RIP1.</text>
</comment>
<comment type="subcellular location">
    <subcellularLocation>
        <location evidence="1">Mitochondrion matrix</location>
    </subcellularLocation>
</comment>
<comment type="similarity">
    <text evidence="4">Belongs to the complex I LYR family. MZM1 subfamily.</text>
</comment>
<proteinExistence type="inferred from homology"/>
<gene>
    <name type="primary">MZM1</name>
    <name type="ORF">NECHADRAFT_92201</name>
</gene>
<keyword id="KW-0143">Chaperone</keyword>
<keyword id="KW-0496">Mitochondrion</keyword>
<keyword id="KW-1185">Reference proteome</keyword>
<keyword id="KW-0809">Transit peptide</keyword>
<evidence type="ECO:0000250" key="1"/>
<evidence type="ECO:0000255" key="2"/>
<evidence type="ECO:0000256" key="3">
    <source>
        <dbReference type="SAM" id="MobiDB-lite"/>
    </source>
</evidence>
<evidence type="ECO:0000305" key="4"/>
<reference key="1">
    <citation type="journal article" date="2009" name="PLoS Genet.">
        <title>The genome of Nectria haematococca: contribution of supernumerary chromosomes to gene expansion.</title>
        <authorList>
            <person name="Coleman J.J."/>
            <person name="Rounsley S.D."/>
            <person name="Rodriguez-Carres M."/>
            <person name="Kuo A."/>
            <person name="Wasmann C.C."/>
            <person name="Grimwood J."/>
            <person name="Schmutz J."/>
            <person name="Taga M."/>
            <person name="White G.J."/>
            <person name="Zhou S."/>
            <person name="Schwartz D.C."/>
            <person name="Freitag M."/>
            <person name="Ma L.-J."/>
            <person name="Danchin E.G.J."/>
            <person name="Henrissat B."/>
            <person name="Coutinho P.M."/>
            <person name="Nelson D.R."/>
            <person name="Straney D."/>
            <person name="Napoli C.A."/>
            <person name="Barker B.M."/>
            <person name="Gribskov M."/>
            <person name="Rep M."/>
            <person name="Kroken S."/>
            <person name="Molnar I."/>
            <person name="Rensing C."/>
            <person name="Kennell J.C."/>
            <person name="Zamora J."/>
            <person name="Farman M.L."/>
            <person name="Selker E.U."/>
            <person name="Salamov A."/>
            <person name="Shapiro H."/>
            <person name="Pangilinan J."/>
            <person name="Lindquist E."/>
            <person name="Lamers C."/>
            <person name="Grigoriev I.V."/>
            <person name="Geiser D.M."/>
            <person name="Covert S.F."/>
            <person name="Temporini E."/>
            <person name="VanEtten H.D."/>
        </authorList>
    </citation>
    <scope>NUCLEOTIDE SEQUENCE [LARGE SCALE GENOMIC DNA]</scope>
    <source>
        <strain>ATCC MYA-4622 / CBS 123669 / FGSC 9596 / NRRL 45880 / 77-13-4</strain>
    </source>
</reference>
<organism>
    <name type="scientific">Fusarium vanettenii (strain ATCC MYA-4622 / CBS 123669 / FGSC 9596 / NRRL 45880 / 77-13-4)</name>
    <name type="common">Fusarium solani subsp. pisi</name>
    <dbReference type="NCBI Taxonomy" id="660122"/>
    <lineage>
        <taxon>Eukaryota</taxon>
        <taxon>Fungi</taxon>
        <taxon>Dikarya</taxon>
        <taxon>Ascomycota</taxon>
        <taxon>Pezizomycotina</taxon>
        <taxon>Sordariomycetes</taxon>
        <taxon>Hypocreomycetidae</taxon>
        <taxon>Hypocreales</taxon>
        <taxon>Nectriaceae</taxon>
        <taxon>Fusarium</taxon>
        <taxon>Fusarium solani species complex</taxon>
        <taxon>Fusarium vanettenii</taxon>
    </lineage>
</organism>
<accession>C7ZKY9</accession>
<protein>
    <recommendedName>
        <fullName>Mitochondrial zinc maintenance protein 1, mitochondrial</fullName>
    </recommendedName>
</protein>
<sequence length="116" mass="12381">MATVPALNAYRHLMRAARIAFQGDTQILSAAQVQIRNEFRQKASIDSTGASAAIQHAEEVAKVLRENVVQGKKTEEGKDTYKLRIHEHTERGDNESILTAGSGNTTGGGCCGGGGR</sequence>